<proteinExistence type="inferred from homology"/>
<sequence>MPKVTKIEVQKKNKERFNLFLDGEFEMGIDIDTLVKFNLKKDQILEPSDMQNIQEYDHYRRGVNLAIQYLSYKKRTEREVIQYLEKNDIQSNAIQDVIDYCYKEKFIDHEDYAESLKNTMIHTTDKGPEIYRQKLYQLGIEVTIIEKYVEAYEQQQPLDDVIKVAEKVMKSKKGPEAKVKQKVTQSLLQKGYKFETIQLVMNEIDFSQDEETLDHLLQRDLEKVYNKNCRKYDSDKSVIKTIEALMRKGYNYDKIKSKLEESGISNE</sequence>
<feature type="chain" id="PRO_0000162475" description="Regulatory protein RecX">
    <location>
        <begin position="1"/>
        <end position="267"/>
    </location>
</feature>
<evidence type="ECO:0000255" key="1">
    <source>
        <dbReference type="HAMAP-Rule" id="MF_01114"/>
    </source>
</evidence>
<dbReference type="EMBL" id="AE015929">
    <property type="protein sequence ID" value="AAO05157.1"/>
    <property type="molecule type" value="Genomic_DNA"/>
</dbReference>
<dbReference type="RefSeq" id="NP_765113.1">
    <property type="nucleotide sequence ID" value="NC_004461.1"/>
</dbReference>
<dbReference type="RefSeq" id="WP_001830417.1">
    <property type="nucleotide sequence ID" value="NZ_WBME01000010.1"/>
</dbReference>
<dbReference type="SMR" id="Q8CRV9"/>
<dbReference type="GeneID" id="50018342"/>
<dbReference type="KEGG" id="sep:SE_1558"/>
<dbReference type="PATRIC" id="fig|176280.10.peg.1522"/>
<dbReference type="eggNOG" id="COG2137">
    <property type="taxonomic scope" value="Bacteria"/>
</dbReference>
<dbReference type="HOGENOM" id="CLU_066607_4_0_9"/>
<dbReference type="OrthoDB" id="5421057at2"/>
<dbReference type="Proteomes" id="UP000001411">
    <property type="component" value="Chromosome"/>
</dbReference>
<dbReference type="GO" id="GO:0005737">
    <property type="term" value="C:cytoplasm"/>
    <property type="evidence" value="ECO:0007669"/>
    <property type="project" value="UniProtKB-SubCell"/>
</dbReference>
<dbReference type="GO" id="GO:0006282">
    <property type="term" value="P:regulation of DNA repair"/>
    <property type="evidence" value="ECO:0007669"/>
    <property type="project" value="UniProtKB-UniRule"/>
</dbReference>
<dbReference type="Gene3D" id="1.10.10.10">
    <property type="entry name" value="Winged helix-like DNA-binding domain superfamily/Winged helix DNA-binding domain"/>
    <property type="match status" value="4"/>
</dbReference>
<dbReference type="HAMAP" id="MF_01114">
    <property type="entry name" value="RecX"/>
    <property type="match status" value="1"/>
</dbReference>
<dbReference type="InterPro" id="IPR053926">
    <property type="entry name" value="RecX_HTH_1st"/>
</dbReference>
<dbReference type="InterPro" id="IPR053925">
    <property type="entry name" value="RecX_HTH_3rd"/>
</dbReference>
<dbReference type="InterPro" id="IPR003783">
    <property type="entry name" value="Regulatory_RecX"/>
</dbReference>
<dbReference type="InterPro" id="IPR036388">
    <property type="entry name" value="WH-like_DNA-bd_sf"/>
</dbReference>
<dbReference type="NCBIfam" id="NF010733">
    <property type="entry name" value="PRK14135.1"/>
    <property type="match status" value="1"/>
</dbReference>
<dbReference type="PANTHER" id="PTHR33602">
    <property type="entry name" value="REGULATORY PROTEIN RECX FAMILY PROTEIN"/>
    <property type="match status" value="1"/>
</dbReference>
<dbReference type="PANTHER" id="PTHR33602:SF1">
    <property type="entry name" value="REGULATORY PROTEIN RECX FAMILY PROTEIN"/>
    <property type="match status" value="1"/>
</dbReference>
<dbReference type="Pfam" id="PF21982">
    <property type="entry name" value="RecX_HTH1"/>
    <property type="match status" value="1"/>
</dbReference>
<dbReference type="Pfam" id="PF21981">
    <property type="entry name" value="RecX_HTH3"/>
    <property type="match status" value="1"/>
</dbReference>
<name>RECX_STAES</name>
<gene>
    <name evidence="1" type="primary">recX</name>
    <name type="ordered locus">SE_1558</name>
</gene>
<protein>
    <recommendedName>
        <fullName evidence="1">Regulatory protein RecX</fullName>
    </recommendedName>
</protein>
<reference key="1">
    <citation type="journal article" date="2003" name="Mol. Microbiol.">
        <title>Genome-based analysis of virulence genes in a non-biofilm-forming Staphylococcus epidermidis strain (ATCC 12228).</title>
        <authorList>
            <person name="Zhang Y.-Q."/>
            <person name="Ren S.-X."/>
            <person name="Li H.-L."/>
            <person name="Wang Y.-X."/>
            <person name="Fu G."/>
            <person name="Yang J."/>
            <person name="Qin Z.-Q."/>
            <person name="Miao Y.-G."/>
            <person name="Wang W.-Y."/>
            <person name="Chen R.-S."/>
            <person name="Shen Y."/>
            <person name="Chen Z."/>
            <person name="Yuan Z.-H."/>
            <person name="Zhao G.-P."/>
            <person name="Qu D."/>
            <person name="Danchin A."/>
            <person name="Wen Y.-M."/>
        </authorList>
    </citation>
    <scope>NUCLEOTIDE SEQUENCE [LARGE SCALE GENOMIC DNA]</scope>
    <source>
        <strain>ATCC 12228 / FDA PCI 1200</strain>
    </source>
</reference>
<comment type="function">
    <text evidence="1">Modulates RecA activity.</text>
</comment>
<comment type="subcellular location">
    <subcellularLocation>
        <location evidence="1">Cytoplasm</location>
    </subcellularLocation>
</comment>
<comment type="similarity">
    <text evidence="1">Belongs to the RecX family.</text>
</comment>
<accession>Q8CRV9</accession>
<keyword id="KW-0963">Cytoplasm</keyword>
<organism>
    <name type="scientific">Staphylococcus epidermidis (strain ATCC 12228 / FDA PCI 1200)</name>
    <dbReference type="NCBI Taxonomy" id="176280"/>
    <lineage>
        <taxon>Bacteria</taxon>
        <taxon>Bacillati</taxon>
        <taxon>Bacillota</taxon>
        <taxon>Bacilli</taxon>
        <taxon>Bacillales</taxon>
        <taxon>Staphylococcaceae</taxon>
        <taxon>Staphylococcus</taxon>
    </lineage>
</organism>